<gene>
    <name evidence="1" type="primary">lgt</name>
    <name type="ordered locus">TTE1744</name>
</gene>
<name>LGT_CALS4</name>
<reference key="1">
    <citation type="journal article" date="2002" name="Genome Res.">
        <title>A complete sequence of the T. tengcongensis genome.</title>
        <authorList>
            <person name="Bao Q."/>
            <person name="Tian Y."/>
            <person name="Li W."/>
            <person name="Xu Z."/>
            <person name="Xuan Z."/>
            <person name="Hu S."/>
            <person name="Dong W."/>
            <person name="Yang J."/>
            <person name="Chen Y."/>
            <person name="Xue Y."/>
            <person name="Xu Y."/>
            <person name="Lai X."/>
            <person name="Huang L."/>
            <person name="Dong X."/>
            <person name="Ma Y."/>
            <person name="Ling L."/>
            <person name="Tan H."/>
            <person name="Chen R."/>
            <person name="Wang J."/>
            <person name="Yu J."/>
            <person name="Yang H."/>
        </authorList>
    </citation>
    <scope>NUCLEOTIDE SEQUENCE [LARGE SCALE GENOMIC DNA]</scope>
    <source>
        <strain>DSM 15242 / JCM 11007 / NBRC 100824 / MB4</strain>
    </source>
</reference>
<evidence type="ECO:0000255" key="1">
    <source>
        <dbReference type="HAMAP-Rule" id="MF_01147"/>
    </source>
</evidence>
<sequence>MDIPSLSPYAFKFGPIAVHWYGIFMAISIAVGGYYLYKQATKLNYDEDFLLNLLMIVVIFGVIGARLMFVLANYPEWFVKDPVQVFKIYEGGLSWHGAVLGGFLAGLYYCRKKGVRINPLEDFAVVGLALGNMLVRVGNIFNHEVLGRPTEFFFGRWPAQLVGVAIGAFLLIRYFYVQKKHMPDGYQFWSFIFYYQLLRGVFEETVKDVPLVWPVYLNEEWGIGLFTMTQVATPFILILAYWMIKRVLNDPNRQYYD</sequence>
<protein>
    <recommendedName>
        <fullName evidence="1">Phosphatidylglycerol--prolipoprotein diacylglyceryl transferase</fullName>
        <ecNumber evidence="1">2.5.1.145</ecNumber>
    </recommendedName>
</protein>
<dbReference type="EC" id="2.5.1.145" evidence="1"/>
<dbReference type="EMBL" id="AE008691">
    <property type="protein sequence ID" value="AAM24938.1"/>
    <property type="molecule type" value="Genomic_DNA"/>
</dbReference>
<dbReference type="RefSeq" id="WP_011025940.1">
    <property type="nucleotide sequence ID" value="NZ_JANUCV010000001.1"/>
</dbReference>
<dbReference type="SMR" id="Q8R980"/>
<dbReference type="STRING" id="273068.TTE1744"/>
<dbReference type="KEGG" id="tte:TTE1744"/>
<dbReference type="eggNOG" id="COG0682">
    <property type="taxonomic scope" value="Bacteria"/>
</dbReference>
<dbReference type="HOGENOM" id="CLU_013386_1_1_9"/>
<dbReference type="OrthoDB" id="871140at2"/>
<dbReference type="UniPathway" id="UPA00664"/>
<dbReference type="Proteomes" id="UP000000555">
    <property type="component" value="Chromosome"/>
</dbReference>
<dbReference type="GO" id="GO:0005886">
    <property type="term" value="C:plasma membrane"/>
    <property type="evidence" value="ECO:0007669"/>
    <property type="project" value="UniProtKB-SubCell"/>
</dbReference>
<dbReference type="GO" id="GO:0008961">
    <property type="term" value="F:phosphatidylglycerol-prolipoprotein diacylglyceryl transferase activity"/>
    <property type="evidence" value="ECO:0007669"/>
    <property type="project" value="UniProtKB-UniRule"/>
</dbReference>
<dbReference type="GO" id="GO:0042158">
    <property type="term" value="P:lipoprotein biosynthetic process"/>
    <property type="evidence" value="ECO:0007669"/>
    <property type="project" value="UniProtKB-UniRule"/>
</dbReference>
<dbReference type="HAMAP" id="MF_01147">
    <property type="entry name" value="Lgt"/>
    <property type="match status" value="1"/>
</dbReference>
<dbReference type="InterPro" id="IPR001640">
    <property type="entry name" value="Lgt"/>
</dbReference>
<dbReference type="NCBIfam" id="NF000779">
    <property type="entry name" value="PRK00052.3-5"/>
    <property type="match status" value="1"/>
</dbReference>
<dbReference type="PANTHER" id="PTHR30589:SF0">
    <property type="entry name" value="PHOSPHATIDYLGLYCEROL--PROLIPOPROTEIN DIACYLGLYCERYL TRANSFERASE"/>
    <property type="match status" value="1"/>
</dbReference>
<dbReference type="PANTHER" id="PTHR30589">
    <property type="entry name" value="PROLIPOPROTEIN DIACYLGLYCERYL TRANSFERASE"/>
    <property type="match status" value="1"/>
</dbReference>
<dbReference type="Pfam" id="PF01790">
    <property type="entry name" value="LGT"/>
    <property type="match status" value="1"/>
</dbReference>
<proteinExistence type="inferred from homology"/>
<comment type="function">
    <text evidence="1">Catalyzes the transfer of the diacylglyceryl group from phosphatidylglycerol to the sulfhydryl group of the N-terminal cysteine of a prolipoprotein, the first step in the formation of mature lipoproteins.</text>
</comment>
<comment type="catalytic activity">
    <reaction evidence="1">
        <text>L-cysteinyl-[prolipoprotein] + a 1,2-diacyl-sn-glycero-3-phospho-(1'-sn-glycerol) = an S-1,2-diacyl-sn-glyceryl-L-cysteinyl-[prolipoprotein] + sn-glycerol 1-phosphate + H(+)</text>
        <dbReference type="Rhea" id="RHEA:56712"/>
        <dbReference type="Rhea" id="RHEA-COMP:14679"/>
        <dbReference type="Rhea" id="RHEA-COMP:14680"/>
        <dbReference type="ChEBI" id="CHEBI:15378"/>
        <dbReference type="ChEBI" id="CHEBI:29950"/>
        <dbReference type="ChEBI" id="CHEBI:57685"/>
        <dbReference type="ChEBI" id="CHEBI:64716"/>
        <dbReference type="ChEBI" id="CHEBI:140658"/>
        <dbReference type="EC" id="2.5.1.145"/>
    </reaction>
</comment>
<comment type="pathway">
    <text evidence="1">Protein modification; lipoprotein biosynthesis (diacylglyceryl transfer).</text>
</comment>
<comment type="subcellular location">
    <subcellularLocation>
        <location evidence="1">Cell membrane</location>
        <topology evidence="1">Multi-pass membrane protein</topology>
    </subcellularLocation>
</comment>
<comment type="similarity">
    <text evidence="1">Belongs to the Lgt family.</text>
</comment>
<accession>Q8R980</accession>
<keyword id="KW-1003">Cell membrane</keyword>
<keyword id="KW-0472">Membrane</keyword>
<keyword id="KW-1185">Reference proteome</keyword>
<keyword id="KW-0808">Transferase</keyword>
<keyword id="KW-0812">Transmembrane</keyword>
<keyword id="KW-1133">Transmembrane helix</keyword>
<feature type="chain" id="PRO_0000172704" description="Phosphatidylglycerol--prolipoprotein diacylglyceryl transferase">
    <location>
        <begin position="1"/>
        <end position="257"/>
    </location>
</feature>
<feature type="transmembrane region" description="Helical" evidence="1">
    <location>
        <begin position="13"/>
        <end position="33"/>
    </location>
</feature>
<feature type="transmembrane region" description="Helical" evidence="1">
    <location>
        <begin position="49"/>
        <end position="69"/>
    </location>
</feature>
<feature type="transmembrane region" description="Helical" evidence="1">
    <location>
        <begin position="88"/>
        <end position="108"/>
    </location>
</feature>
<feature type="transmembrane region" description="Helical" evidence="1">
    <location>
        <begin position="123"/>
        <end position="143"/>
    </location>
</feature>
<feature type="transmembrane region" description="Helical" evidence="1">
    <location>
        <begin position="152"/>
        <end position="172"/>
    </location>
</feature>
<feature type="transmembrane region" description="Helical" evidence="1">
    <location>
        <begin position="186"/>
        <end position="202"/>
    </location>
</feature>
<feature type="transmembrane region" description="Helical" evidence="1">
    <location>
        <begin position="223"/>
        <end position="243"/>
    </location>
</feature>
<feature type="binding site" evidence="1">
    <location>
        <position position="136"/>
    </location>
    <ligand>
        <name>a 1,2-diacyl-sn-glycero-3-phospho-(1'-sn-glycerol)</name>
        <dbReference type="ChEBI" id="CHEBI:64716"/>
    </ligand>
</feature>
<organism>
    <name type="scientific">Caldanaerobacter subterraneus subsp. tengcongensis (strain DSM 15242 / JCM 11007 / NBRC 100824 / MB4)</name>
    <name type="common">Thermoanaerobacter tengcongensis</name>
    <dbReference type="NCBI Taxonomy" id="273068"/>
    <lineage>
        <taxon>Bacteria</taxon>
        <taxon>Bacillati</taxon>
        <taxon>Bacillota</taxon>
        <taxon>Clostridia</taxon>
        <taxon>Thermoanaerobacterales</taxon>
        <taxon>Thermoanaerobacteraceae</taxon>
        <taxon>Caldanaerobacter</taxon>
    </lineage>
</organism>